<reference key="1">
    <citation type="submission" date="2007-02" db="EMBL/GenBank/DDBJ databases">
        <authorList>
            <person name="Wistow G."/>
        </authorList>
    </citation>
    <scope>NUCLEOTIDE SEQUENCE [MRNA]</scope>
    <source>
        <tissue>Lens</tissue>
    </source>
</reference>
<organism>
    <name type="scientific">Oryctolagus cuniculus</name>
    <name type="common">Rabbit</name>
    <dbReference type="NCBI Taxonomy" id="9986"/>
    <lineage>
        <taxon>Eukaryota</taxon>
        <taxon>Metazoa</taxon>
        <taxon>Chordata</taxon>
        <taxon>Craniata</taxon>
        <taxon>Vertebrata</taxon>
        <taxon>Euteleostomi</taxon>
        <taxon>Mammalia</taxon>
        <taxon>Eutheria</taxon>
        <taxon>Euarchontoglires</taxon>
        <taxon>Glires</taxon>
        <taxon>Lagomorpha</taxon>
        <taxon>Leporidae</taxon>
        <taxon>Oryctolagus</taxon>
    </lineage>
</organism>
<protein>
    <recommendedName>
        <fullName evidence="2">Lens fiber major intrinsic protein</fullName>
    </recommendedName>
    <alternativeName>
        <fullName evidence="2">Aquaporin-0</fullName>
    </alternativeName>
</protein>
<comment type="function">
    <text evidence="2">Aquaporins form homotetrameric transmembrane channels, with each monomer independently mediating water transport across the plasma membrane along its osmotic gradient. Specifically expressed in lens fiber cells, this aquaporin is crucial for maintaining lens water homeostasis and transparency. Beyond water permeability, it also acts as a cell-to-cell adhesion molecule, forming thin junctions between lens fiber cells that are essential for maintaining the ordered structure and transparency of the lens.</text>
</comment>
<comment type="catalytic activity">
    <reaction evidence="2">
        <text>H2O(in) = H2O(out)</text>
        <dbReference type="Rhea" id="RHEA:29667"/>
        <dbReference type="ChEBI" id="CHEBI:15377"/>
    </reaction>
</comment>
<comment type="activity regulation">
    <text evidence="2">The water channel activity is inhibited by calcium through calmodulin/CALM.</text>
</comment>
<comment type="subunit">
    <text evidence="1 2">Homotetramer; each monomer provides an independent water pore. Two homotetramers on opposing membranes can dimerize, forming a cell-cell junction. Interacts with CALM; the calcium-calmodulin/CALM complex interacts with the cytoplasmic domains of two aquaporins, leading to channel closure (By similarity). Interacts with BFSP1 (via C-terminus); prevents calcium-dependent inhibition of the water channel activity (By similarity).</text>
</comment>
<comment type="subcellular location">
    <subcellularLocation>
        <location evidence="2">Cell membrane</location>
        <topology evidence="3">Multi-pass membrane protein</topology>
    </subcellularLocation>
    <subcellularLocation>
        <location evidence="3">Cell junction</location>
    </subcellularLocation>
    <text evidence="3">Localizes to thin cell-cell junctions in lens fiber cells.</text>
</comment>
<comment type="domain">
    <text evidence="3">Aquaporins contain two tandem repeats each containing three membrane-spanning domains and a pore-forming loop with the signature motif Asn-Pro-Ala (NPA).</text>
</comment>
<comment type="PTM">
    <text evidence="3">Subject to partial proteolytic cleavage in the eye lens core. Partial proteolysis promotes interactions between tetramers from adjoining membranes.</text>
</comment>
<comment type="PTM">
    <text evidence="2">Fatty acylated at Met-1 and Lys-238. The acyl modifications, in decreasing order of ion abundance, are: oleoyl (C18:1) &gt; palmitoyl (C16:0) &gt; stearoyl (C18:0) &gt; eicosenoyl (C20:1) &gt; dihomo-gamma-linolenoyl (C20:3) &gt; palmitoleoyl (C16:1) &gt; eicosadienoyl (C20:2).</text>
</comment>
<comment type="similarity">
    <text evidence="5">Belongs to the MIP/aquaporin (TC 1.A.8) family.</text>
</comment>
<gene>
    <name evidence="2" type="primary">MIP</name>
</gene>
<keyword id="KW-0965">Cell junction</keyword>
<keyword id="KW-1003">Cell membrane</keyword>
<keyword id="KW-0273">Eye lens protein</keyword>
<keyword id="KW-0449">Lipoprotein</keyword>
<keyword id="KW-0472">Membrane</keyword>
<keyword id="KW-0597">Phosphoprotein</keyword>
<keyword id="KW-1185">Reference proteome</keyword>
<keyword id="KW-0677">Repeat</keyword>
<keyword id="KW-0716">Sensory transduction</keyword>
<keyword id="KW-0812">Transmembrane</keyword>
<keyword id="KW-1133">Transmembrane helix</keyword>
<keyword id="KW-0813">Transport</keyword>
<proteinExistence type="evidence at transcript level"/>
<dbReference type="EMBL" id="EF457887">
    <property type="protein sequence ID" value="ABO41863.1"/>
    <property type="molecule type" value="mRNA"/>
</dbReference>
<dbReference type="RefSeq" id="NP_001093431.1">
    <property type="nucleotide sequence ID" value="NM_001099961.1"/>
</dbReference>
<dbReference type="SMR" id="A4L9J0"/>
<dbReference type="FunCoup" id="A4L9J0">
    <property type="interactions" value="97"/>
</dbReference>
<dbReference type="STRING" id="9986.ENSOCUP00000017555"/>
<dbReference type="iPTMnet" id="A4L9J0"/>
<dbReference type="PaxDb" id="9986-ENSOCUP00000017555"/>
<dbReference type="Ensembl" id="ENSOCUT00000027037.1">
    <property type="protein sequence ID" value="ENSOCUP00000017555.1"/>
    <property type="gene ID" value="ENSOCUG00000022630.1"/>
</dbReference>
<dbReference type="GeneID" id="100101574"/>
<dbReference type="KEGG" id="ocu:100101574"/>
<dbReference type="CTD" id="4284"/>
<dbReference type="eggNOG" id="KOG0223">
    <property type="taxonomic scope" value="Eukaryota"/>
</dbReference>
<dbReference type="GeneTree" id="ENSGT00940000156260"/>
<dbReference type="HOGENOM" id="CLU_020019_3_3_1"/>
<dbReference type="InParanoid" id="A4L9J0"/>
<dbReference type="OMA" id="LALNTMH"/>
<dbReference type="OrthoDB" id="3222at2759"/>
<dbReference type="TreeFam" id="TF312940"/>
<dbReference type="Proteomes" id="UP000001811">
    <property type="component" value="Chromosome 4"/>
</dbReference>
<dbReference type="Bgee" id="ENSOCUG00000022630">
    <property type="expression patterns" value="Expressed in embryo and 4 other cell types or tissues"/>
</dbReference>
<dbReference type="GO" id="GO:0070161">
    <property type="term" value="C:anchoring junction"/>
    <property type="evidence" value="ECO:0007669"/>
    <property type="project" value="UniProtKB-SubCell"/>
</dbReference>
<dbReference type="GO" id="GO:0016324">
    <property type="term" value="C:apical plasma membrane"/>
    <property type="evidence" value="ECO:0007669"/>
    <property type="project" value="TreeGrafter"/>
</dbReference>
<dbReference type="GO" id="GO:0005886">
    <property type="term" value="C:plasma membrane"/>
    <property type="evidence" value="ECO:0000250"/>
    <property type="project" value="UniProtKB"/>
</dbReference>
<dbReference type="GO" id="GO:0005516">
    <property type="term" value="F:calmodulin binding"/>
    <property type="evidence" value="ECO:0000250"/>
    <property type="project" value="UniProtKB"/>
</dbReference>
<dbReference type="GO" id="GO:0098631">
    <property type="term" value="F:cell adhesion mediator activity"/>
    <property type="evidence" value="ECO:0000250"/>
    <property type="project" value="UniProtKB"/>
</dbReference>
<dbReference type="GO" id="GO:0005212">
    <property type="term" value="F:structural constituent of eye lens"/>
    <property type="evidence" value="ECO:0007669"/>
    <property type="project" value="UniProtKB-KW"/>
</dbReference>
<dbReference type="GO" id="GO:0015250">
    <property type="term" value="F:water channel activity"/>
    <property type="evidence" value="ECO:0000250"/>
    <property type="project" value="UniProtKB"/>
</dbReference>
<dbReference type="GO" id="GO:1990349">
    <property type="term" value="P:gap junction-mediated intercellular transport"/>
    <property type="evidence" value="ECO:0007669"/>
    <property type="project" value="Ensembl"/>
</dbReference>
<dbReference type="GO" id="GO:0034109">
    <property type="term" value="P:homotypic cell-cell adhesion"/>
    <property type="evidence" value="ECO:0000250"/>
    <property type="project" value="UniProtKB"/>
</dbReference>
<dbReference type="GO" id="GO:0002088">
    <property type="term" value="P:lens development in camera-type eye"/>
    <property type="evidence" value="ECO:0007669"/>
    <property type="project" value="Ensembl"/>
</dbReference>
<dbReference type="GO" id="GO:0036438">
    <property type="term" value="P:maintenance of lens transparency"/>
    <property type="evidence" value="ECO:0000250"/>
    <property type="project" value="UniProtKB"/>
</dbReference>
<dbReference type="GO" id="GO:0007601">
    <property type="term" value="P:visual perception"/>
    <property type="evidence" value="ECO:0007669"/>
    <property type="project" value="Ensembl"/>
</dbReference>
<dbReference type="GO" id="GO:0006833">
    <property type="term" value="P:water transport"/>
    <property type="evidence" value="ECO:0000250"/>
    <property type="project" value="UniProtKB"/>
</dbReference>
<dbReference type="CDD" id="cd00333">
    <property type="entry name" value="MIP"/>
    <property type="match status" value="1"/>
</dbReference>
<dbReference type="FunFam" id="1.20.1080.10:FF:000003">
    <property type="entry name" value="Lens fiber major intrinsic"/>
    <property type="match status" value="1"/>
</dbReference>
<dbReference type="Gene3D" id="1.20.1080.10">
    <property type="entry name" value="Glycerol uptake facilitator protein"/>
    <property type="match status" value="1"/>
</dbReference>
<dbReference type="InterPro" id="IPR023271">
    <property type="entry name" value="Aquaporin-like"/>
</dbReference>
<dbReference type="InterPro" id="IPR034294">
    <property type="entry name" value="Aquaporin_transptr"/>
</dbReference>
<dbReference type="InterPro" id="IPR000425">
    <property type="entry name" value="MIP"/>
</dbReference>
<dbReference type="InterPro" id="IPR022357">
    <property type="entry name" value="MIP_CS"/>
</dbReference>
<dbReference type="NCBIfam" id="TIGR00861">
    <property type="entry name" value="MIP"/>
    <property type="match status" value="1"/>
</dbReference>
<dbReference type="PANTHER" id="PTHR19139">
    <property type="entry name" value="AQUAPORIN TRANSPORTER"/>
    <property type="match status" value="1"/>
</dbReference>
<dbReference type="PANTHER" id="PTHR19139:SF39">
    <property type="entry name" value="LENS FIBER MAJOR INTRINSIC PROTEIN"/>
    <property type="match status" value="1"/>
</dbReference>
<dbReference type="Pfam" id="PF00230">
    <property type="entry name" value="MIP"/>
    <property type="match status" value="1"/>
</dbReference>
<dbReference type="PRINTS" id="PR00783">
    <property type="entry name" value="MINTRINSICP"/>
</dbReference>
<dbReference type="SUPFAM" id="SSF81338">
    <property type="entry name" value="Aquaporin-like"/>
    <property type="match status" value="1"/>
</dbReference>
<dbReference type="PROSITE" id="PS00221">
    <property type="entry name" value="MIP"/>
    <property type="match status" value="1"/>
</dbReference>
<accession>A4L9J0</accession>
<name>MIP_RABIT</name>
<sequence length="263" mass="28171">MWELRSASFWRAIFAEFFATLFYVFFGLGASLRWAPGPLHVLQVALAFGLALATLVQAVGHISGAHVNPAVTFAFLVGSQMSLLRAICYMAAQLLGAVAGAAVLYSVTPAAVRGNLALNTLHPGVSLGQATTVEIFLTLQFVLCIFATYDERRNGRLGSVALAVGFSLTLGHLFGMYYTGAGMNPARSFAPAILTRNFTNHWVYWVGPIIGGGLASLLYDFLLFPRLKSVSERLSILKGARPSDSNGQPEGTGEPVELKTQAL</sequence>
<evidence type="ECO:0000250" key="1">
    <source>
        <dbReference type="UniProtKB" id="P06624"/>
    </source>
</evidence>
<evidence type="ECO:0000250" key="2">
    <source>
        <dbReference type="UniProtKB" id="P30301"/>
    </source>
</evidence>
<evidence type="ECO:0000250" key="3">
    <source>
        <dbReference type="UniProtKB" id="Q6J8I9"/>
    </source>
</evidence>
<evidence type="ECO:0000256" key="4">
    <source>
        <dbReference type="SAM" id="MobiDB-lite"/>
    </source>
</evidence>
<evidence type="ECO:0000305" key="5"/>
<feature type="chain" id="PRO_0000289610" description="Lens fiber major intrinsic protein">
    <location>
        <begin position="1"/>
        <end position="263"/>
    </location>
</feature>
<feature type="topological domain" description="Cytoplasmic" evidence="1">
    <location>
        <begin position="1"/>
        <end position="9"/>
    </location>
</feature>
<feature type="transmembrane region" description="Helical; Name=1" evidence="1">
    <location>
        <begin position="10"/>
        <end position="29"/>
    </location>
</feature>
<feature type="topological domain" description="Extracellular" evidence="1">
    <location>
        <begin position="30"/>
        <end position="41"/>
    </location>
</feature>
<feature type="transmembrane region" description="Helical; Name=2" evidence="1">
    <location>
        <begin position="42"/>
        <end position="59"/>
    </location>
</feature>
<feature type="topological domain" description="Cytoplasmic" evidence="1">
    <location>
        <begin position="60"/>
        <end position="61"/>
    </location>
</feature>
<feature type="intramembrane region" description="Discontinuously helical" evidence="1">
    <location>
        <begin position="62"/>
        <end position="77"/>
    </location>
</feature>
<feature type="topological domain" description="Cytoplasmic" evidence="1">
    <location>
        <begin position="78"/>
        <end position="82"/>
    </location>
</feature>
<feature type="transmembrane region" description="Helical; Name=3" evidence="1">
    <location>
        <begin position="83"/>
        <end position="106"/>
    </location>
</feature>
<feature type="topological domain" description="Extracellular" evidence="1">
    <location>
        <begin position="107"/>
        <end position="127"/>
    </location>
</feature>
<feature type="transmembrane region" description="Helical; Name=4" evidence="1">
    <location>
        <begin position="128"/>
        <end position="148"/>
    </location>
</feature>
<feature type="topological domain" description="Cytoplasmic" evidence="1">
    <location>
        <begin position="149"/>
        <end position="156"/>
    </location>
</feature>
<feature type="transmembrane region" description="Helical; Name=5" evidence="1">
    <location>
        <begin position="157"/>
        <end position="175"/>
    </location>
</feature>
<feature type="topological domain" description="Extracellular" evidence="1">
    <location>
        <begin position="176"/>
        <end position="178"/>
    </location>
</feature>
<feature type="intramembrane region" description="Discontinuously helical" evidence="1">
    <location>
        <begin position="179"/>
        <end position="193"/>
    </location>
</feature>
<feature type="topological domain" description="Extracellular" evidence="1">
    <location>
        <begin position="194"/>
        <end position="200"/>
    </location>
</feature>
<feature type="transmembrane region" description="Helical; Name=6" evidence="1">
    <location>
        <begin position="201"/>
        <end position="222"/>
    </location>
</feature>
<feature type="topological domain" description="Cytoplasmic" evidence="1">
    <location>
        <begin position="223"/>
        <end position="263"/>
    </location>
</feature>
<feature type="region of interest" description="Interaction with CALM" evidence="1">
    <location>
        <begin position="227"/>
        <end position="237"/>
    </location>
</feature>
<feature type="region of interest" description="Disordered" evidence="4">
    <location>
        <begin position="240"/>
        <end position="263"/>
    </location>
</feature>
<feature type="short sequence motif" description="NPA 1" evidence="1">
    <location>
        <begin position="68"/>
        <end position="70"/>
    </location>
</feature>
<feature type="short sequence motif" description="NPA 2" evidence="1">
    <location>
        <begin position="184"/>
        <end position="186"/>
    </location>
</feature>
<feature type="site" description="Important for water channel gating" evidence="1">
    <location>
        <position position="149"/>
    </location>
</feature>
<feature type="site" description="Interaction with BFSP1" evidence="1">
    <location>
        <position position="246"/>
    </location>
</feature>
<feature type="site" description="interaction with BFSP1" evidence="1">
    <location>
        <position position="250"/>
    </location>
</feature>
<feature type="modified residue" description="Phosphoserine" evidence="1">
    <location>
        <position position="235"/>
    </location>
</feature>
<feature type="modified residue" description="Phosphoserine" evidence="1">
    <location>
        <position position="243"/>
    </location>
</feature>
<feature type="modified residue" description="Phosphoserine" evidence="1">
    <location>
        <position position="245"/>
    </location>
</feature>
<feature type="modified residue" description="Deamidated asparagine" evidence="2">
    <location>
        <position position="246"/>
    </location>
</feature>